<protein>
    <recommendedName>
        <fullName>UDP-glycosyltransferase 85A1</fullName>
        <ecNumber>2.4.1.-</ecNumber>
    </recommendedName>
    <alternativeName>
        <fullName>Cytokinin-O-glucosyltransferase 2</fullName>
    </alternativeName>
    <alternativeName>
        <fullName>Zeatin O-glucosyltransferase 2</fullName>
        <shortName>AtZOG2</shortName>
    </alternativeName>
</protein>
<dbReference type="EC" id="2.4.1.-"/>
<dbReference type="EMBL" id="AC006551">
    <property type="protein sequence ID" value="AAF18537.1"/>
    <property type="molecule type" value="Genomic_DNA"/>
</dbReference>
<dbReference type="EMBL" id="CP002684">
    <property type="protein sequence ID" value="AEE30237.1"/>
    <property type="molecule type" value="Genomic_DNA"/>
</dbReference>
<dbReference type="EMBL" id="AY081339">
    <property type="protein sequence ID" value="AAL91228.1"/>
    <property type="molecule type" value="mRNA"/>
</dbReference>
<dbReference type="EMBL" id="BT008765">
    <property type="protein sequence ID" value="AAP49527.1"/>
    <property type="molecule type" value="mRNA"/>
</dbReference>
<dbReference type="PIR" id="H86356">
    <property type="entry name" value="H86356"/>
</dbReference>
<dbReference type="RefSeq" id="NP_173656.1">
    <property type="nucleotide sequence ID" value="NM_102089.5"/>
</dbReference>
<dbReference type="SMR" id="Q9SK82"/>
<dbReference type="FunCoup" id="Q9SK82">
    <property type="interactions" value="252"/>
</dbReference>
<dbReference type="STRING" id="3702.Q9SK82"/>
<dbReference type="CAZy" id="GT1">
    <property type="family name" value="Glycosyltransferase Family 1"/>
</dbReference>
<dbReference type="PaxDb" id="3702-AT1G22400.1"/>
<dbReference type="ProteomicsDB" id="242812"/>
<dbReference type="EnsemblPlants" id="AT1G22400.1">
    <property type="protein sequence ID" value="AT1G22400.1"/>
    <property type="gene ID" value="AT1G22400"/>
</dbReference>
<dbReference type="GeneID" id="838846"/>
<dbReference type="Gramene" id="AT1G22400.1">
    <property type="protein sequence ID" value="AT1G22400.1"/>
    <property type="gene ID" value="AT1G22400"/>
</dbReference>
<dbReference type="KEGG" id="ath:AT1G22400"/>
<dbReference type="Araport" id="AT1G22400"/>
<dbReference type="TAIR" id="AT1G22400">
    <property type="gene designation" value="UGT85A1"/>
</dbReference>
<dbReference type="eggNOG" id="KOG1192">
    <property type="taxonomic scope" value="Eukaryota"/>
</dbReference>
<dbReference type="HOGENOM" id="CLU_001724_0_0_1"/>
<dbReference type="InParanoid" id="Q9SK82"/>
<dbReference type="OMA" id="FLGFRHY"/>
<dbReference type="PhylomeDB" id="Q9SK82"/>
<dbReference type="BioCyc" id="ARA:AT1G22400-MONOMER"/>
<dbReference type="BioCyc" id="MetaCyc:AT1G22400-MONOMER"/>
<dbReference type="BRENDA" id="2.4.1.203">
    <property type="organism ID" value="399"/>
</dbReference>
<dbReference type="PRO" id="PR:Q9SK82"/>
<dbReference type="Proteomes" id="UP000006548">
    <property type="component" value="Chromosome 1"/>
</dbReference>
<dbReference type="ExpressionAtlas" id="Q9SK82">
    <property type="expression patterns" value="baseline and differential"/>
</dbReference>
<dbReference type="GO" id="GO:0050502">
    <property type="term" value="F:cis-zeatin O-beta-D-glucosyltransferase activity"/>
    <property type="evidence" value="ECO:0000314"/>
    <property type="project" value="TAIR"/>
</dbReference>
<dbReference type="GO" id="GO:0015020">
    <property type="term" value="F:glucuronosyltransferase activity"/>
    <property type="evidence" value="ECO:0000250"/>
    <property type="project" value="TAIR"/>
</dbReference>
<dbReference type="GO" id="GO:0050403">
    <property type="term" value="F:trans-zeatin O-beta-D-glucosyltransferase activity"/>
    <property type="evidence" value="ECO:0000314"/>
    <property type="project" value="TAIR"/>
</dbReference>
<dbReference type="CDD" id="cd03784">
    <property type="entry name" value="GT1_Gtf-like"/>
    <property type="match status" value="1"/>
</dbReference>
<dbReference type="FunFam" id="3.40.50.2000:FF:000027">
    <property type="entry name" value="Glycosyltransferase"/>
    <property type="match status" value="1"/>
</dbReference>
<dbReference type="FunFam" id="3.40.50.2000:FF:000055">
    <property type="entry name" value="Glycosyltransferase"/>
    <property type="match status" value="1"/>
</dbReference>
<dbReference type="Gene3D" id="3.40.50.2000">
    <property type="entry name" value="Glycogen Phosphorylase B"/>
    <property type="match status" value="2"/>
</dbReference>
<dbReference type="InterPro" id="IPR002213">
    <property type="entry name" value="UDP_glucos_trans"/>
</dbReference>
<dbReference type="InterPro" id="IPR035595">
    <property type="entry name" value="UDP_glycos_trans_CS"/>
</dbReference>
<dbReference type="PANTHER" id="PTHR11926">
    <property type="entry name" value="GLUCOSYL/GLUCURONOSYL TRANSFERASES"/>
    <property type="match status" value="1"/>
</dbReference>
<dbReference type="PANTHER" id="PTHR11926:SF774">
    <property type="entry name" value="UDP-GLYCOSYLTRANSFERASE 85A1-RELATED"/>
    <property type="match status" value="1"/>
</dbReference>
<dbReference type="Pfam" id="PF00201">
    <property type="entry name" value="UDPGT"/>
    <property type="match status" value="1"/>
</dbReference>
<dbReference type="SUPFAM" id="SSF53756">
    <property type="entry name" value="UDP-Glycosyltransferase/glycogen phosphorylase"/>
    <property type="match status" value="1"/>
</dbReference>
<dbReference type="PROSITE" id="PS00375">
    <property type="entry name" value="UDPGT"/>
    <property type="match status" value="1"/>
</dbReference>
<organism>
    <name type="scientific">Arabidopsis thaliana</name>
    <name type="common">Mouse-ear cress</name>
    <dbReference type="NCBI Taxonomy" id="3702"/>
    <lineage>
        <taxon>Eukaryota</taxon>
        <taxon>Viridiplantae</taxon>
        <taxon>Streptophyta</taxon>
        <taxon>Embryophyta</taxon>
        <taxon>Tracheophyta</taxon>
        <taxon>Spermatophyta</taxon>
        <taxon>Magnoliopsida</taxon>
        <taxon>eudicotyledons</taxon>
        <taxon>Gunneridae</taxon>
        <taxon>Pentapetalae</taxon>
        <taxon>rosids</taxon>
        <taxon>malvids</taxon>
        <taxon>Brassicales</taxon>
        <taxon>Brassicaceae</taxon>
        <taxon>Camelineae</taxon>
        <taxon>Arabidopsis</taxon>
    </lineage>
</organism>
<gene>
    <name type="primary">UGT85A1</name>
    <name type="synonym">ZOG2</name>
    <name type="ordered locus">At1g22400</name>
    <name type="ORF">F12K8.26</name>
</gene>
<sequence>MGSQIIHNSQKPHVVCVPYPAQGHINPMMRVAKLLHARGFYVTFVNTVYNHNRFLRSRGSNALDGLPSFRFESIADGLPETDMDATQDITALCESTMKNCLAPFRELLQRINAGDNVPPVSCIVSDGCMSFTLDVAEELGVPEVLFWTTSGCAFLAYLHFYLFIEKGLCPLKDESYLTKEYLEDTVIDFIPTMKNVKLKDIPSFIRTTNPDDVMISFALRETERAKRASAIILNTFDDLEHDVVHAMQSILPPVYSVGPLHLLANREIEEGSEIGMMSSNLWKEEMECLDWLDTKTQNSVIYINFGSITVLSVKQLVEFAWGLAGSGKEFLWVIRPDLVAGEEAMVPPDFLMETKDRSMLASWCPQEKVLSHPAIGGFLTHCGWNSILESLSCGVPMVCWPFFADQQMNCKFCCDEWDVGIEIGGDVKREEVEAVVRELMDGEKGKKMREKAVEWQRLAEKATEHKLGSSVMNFETVVSKFLLGQKSQD</sequence>
<evidence type="ECO:0000250" key="1"/>
<evidence type="ECO:0000269" key="2">
    <source>
    </source>
</evidence>
<evidence type="ECO:0000269" key="3">
    <source>
    </source>
</evidence>
<evidence type="ECO:0000305" key="4"/>
<reference key="1">
    <citation type="journal article" date="2000" name="Nature">
        <title>Sequence and analysis of chromosome 1 of the plant Arabidopsis thaliana.</title>
        <authorList>
            <person name="Theologis A."/>
            <person name="Ecker J.R."/>
            <person name="Palm C.J."/>
            <person name="Federspiel N.A."/>
            <person name="Kaul S."/>
            <person name="White O."/>
            <person name="Alonso J."/>
            <person name="Altafi H."/>
            <person name="Araujo R."/>
            <person name="Bowman C.L."/>
            <person name="Brooks S.Y."/>
            <person name="Buehler E."/>
            <person name="Chan A."/>
            <person name="Chao Q."/>
            <person name="Chen H."/>
            <person name="Cheuk R.F."/>
            <person name="Chin C.W."/>
            <person name="Chung M.K."/>
            <person name="Conn L."/>
            <person name="Conway A.B."/>
            <person name="Conway A.R."/>
            <person name="Creasy T.H."/>
            <person name="Dewar K."/>
            <person name="Dunn P."/>
            <person name="Etgu P."/>
            <person name="Feldblyum T.V."/>
            <person name="Feng J.-D."/>
            <person name="Fong B."/>
            <person name="Fujii C.Y."/>
            <person name="Gill J.E."/>
            <person name="Goldsmith A.D."/>
            <person name="Haas B."/>
            <person name="Hansen N.F."/>
            <person name="Hughes B."/>
            <person name="Huizar L."/>
            <person name="Hunter J.L."/>
            <person name="Jenkins J."/>
            <person name="Johnson-Hopson C."/>
            <person name="Khan S."/>
            <person name="Khaykin E."/>
            <person name="Kim C.J."/>
            <person name="Koo H.L."/>
            <person name="Kremenetskaia I."/>
            <person name="Kurtz D.B."/>
            <person name="Kwan A."/>
            <person name="Lam B."/>
            <person name="Langin-Hooper S."/>
            <person name="Lee A."/>
            <person name="Lee J.M."/>
            <person name="Lenz C.A."/>
            <person name="Li J.H."/>
            <person name="Li Y.-P."/>
            <person name="Lin X."/>
            <person name="Liu S.X."/>
            <person name="Liu Z.A."/>
            <person name="Luros J.S."/>
            <person name="Maiti R."/>
            <person name="Marziali A."/>
            <person name="Militscher J."/>
            <person name="Miranda M."/>
            <person name="Nguyen M."/>
            <person name="Nierman W.C."/>
            <person name="Osborne B.I."/>
            <person name="Pai G."/>
            <person name="Peterson J."/>
            <person name="Pham P.K."/>
            <person name="Rizzo M."/>
            <person name="Rooney T."/>
            <person name="Rowley D."/>
            <person name="Sakano H."/>
            <person name="Salzberg S.L."/>
            <person name="Schwartz J.R."/>
            <person name="Shinn P."/>
            <person name="Southwick A.M."/>
            <person name="Sun H."/>
            <person name="Tallon L.J."/>
            <person name="Tambunga G."/>
            <person name="Toriumi M.J."/>
            <person name="Town C.D."/>
            <person name="Utterback T."/>
            <person name="Van Aken S."/>
            <person name="Vaysberg M."/>
            <person name="Vysotskaia V.S."/>
            <person name="Walker M."/>
            <person name="Wu D."/>
            <person name="Yu G."/>
            <person name="Fraser C.M."/>
            <person name="Venter J.C."/>
            <person name="Davis R.W."/>
        </authorList>
    </citation>
    <scope>NUCLEOTIDE SEQUENCE [LARGE SCALE GENOMIC DNA]</scope>
    <source>
        <strain>cv. Columbia</strain>
    </source>
</reference>
<reference key="2">
    <citation type="journal article" date="2017" name="Plant J.">
        <title>Araport11: a complete reannotation of the Arabidopsis thaliana reference genome.</title>
        <authorList>
            <person name="Cheng C.Y."/>
            <person name="Krishnakumar V."/>
            <person name="Chan A.P."/>
            <person name="Thibaud-Nissen F."/>
            <person name="Schobel S."/>
            <person name="Town C.D."/>
        </authorList>
    </citation>
    <scope>GENOME REANNOTATION</scope>
    <source>
        <strain>cv. Columbia</strain>
    </source>
</reference>
<reference key="3">
    <citation type="journal article" date="2003" name="Science">
        <title>Empirical analysis of transcriptional activity in the Arabidopsis genome.</title>
        <authorList>
            <person name="Yamada K."/>
            <person name="Lim J."/>
            <person name="Dale J.M."/>
            <person name="Chen H."/>
            <person name="Shinn P."/>
            <person name="Palm C.J."/>
            <person name="Southwick A.M."/>
            <person name="Wu H.C."/>
            <person name="Kim C.J."/>
            <person name="Nguyen M."/>
            <person name="Pham P.K."/>
            <person name="Cheuk R.F."/>
            <person name="Karlin-Newmann G."/>
            <person name="Liu S.X."/>
            <person name="Lam B."/>
            <person name="Sakano H."/>
            <person name="Wu T."/>
            <person name="Yu G."/>
            <person name="Miranda M."/>
            <person name="Quach H.L."/>
            <person name="Tripp M."/>
            <person name="Chang C.H."/>
            <person name="Lee J.M."/>
            <person name="Toriumi M.J."/>
            <person name="Chan M.M."/>
            <person name="Tang C.C."/>
            <person name="Onodera C.S."/>
            <person name="Deng J.M."/>
            <person name="Akiyama K."/>
            <person name="Ansari Y."/>
            <person name="Arakawa T."/>
            <person name="Banh J."/>
            <person name="Banno F."/>
            <person name="Bowser L."/>
            <person name="Brooks S.Y."/>
            <person name="Carninci P."/>
            <person name="Chao Q."/>
            <person name="Choy N."/>
            <person name="Enju A."/>
            <person name="Goldsmith A.D."/>
            <person name="Gurjal M."/>
            <person name="Hansen N.F."/>
            <person name="Hayashizaki Y."/>
            <person name="Johnson-Hopson C."/>
            <person name="Hsuan V.W."/>
            <person name="Iida K."/>
            <person name="Karnes M."/>
            <person name="Khan S."/>
            <person name="Koesema E."/>
            <person name="Ishida J."/>
            <person name="Jiang P.X."/>
            <person name="Jones T."/>
            <person name="Kawai J."/>
            <person name="Kamiya A."/>
            <person name="Meyers C."/>
            <person name="Nakajima M."/>
            <person name="Narusaka M."/>
            <person name="Seki M."/>
            <person name="Sakurai T."/>
            <person name="Satou M."/>
            <person name="Tamse R."/>
            <person name="Vaysberg M."/>
            <person name="Wallender E.K."/>
            <person name="Wong C."/>
            <person name="Yamamura Y."/>
            <person name="Yuan S."/>
            <person name="Shinozaki K."/>
            <person name="Davis R.W."/>
            <person name="Theologis A."/>
            <person name="Ecker J.R."/>
        </authorList>
    </citation>
    <scope>NUCLEOTIDE SEQUENCE [LARGE SCALE MRNA]</scope>
    <source>
        <strain>cv. Columbia</strain>
    </source>
</reference>
<reference key="4">
    <citation type="journal article" date="2001" name="J. Biol. Chem.">
        <title>Phylogenetic analysis of the UDP-glycosyltransferase multigene family of Arabidopsis thaliana.</title>
        <authorList>
            <person name="Li Y."/>
            <person name="Baldauf S."/>
            <person name="Lim E.K."/>
            <person name="Bowles D.J."/>
        </authorList>
    </citation>
    <scope>GENE FAMILY</scope>
</reference>
<reference key="5">
    <citation type="journal article" date="2004" name="J. Biol. Chem.">
        <title>N-glucosylation of cytokinins by glycosyltransferases of Arabidopsis thaliana.</title>
        <authorList>
            <person name="Hou B."/>
            <person name="Lim E.-K."/>
            <person name="Higgins G.S."/>
            <person name="Bowles D.J."/>
        </authorList>
    </citation>
    <scope>FUNCTION</scope>
</reference>
<reference key="6">
    <citation type="journal article" date="2007" name="Genomics">
        <title>Characterization of Arabidopsis AtUGT85A and AtGUS gene families and their expression in rapidly dividing tissues.</title>
        <authorList>
            <person name="Woo H.H."/>
            <person name="Jeong B.R."/>
            <person name="Hirsch A.M."/>
            <person name="Hawes M.C."/>
        </authorList>
    </citation>
    <scope>TISSUE SPECIFICITY</scope>
</reference>
<accession>Q9SK82</accession>
<keyword id="KW-0328">Glycosyltransferase</keyword>
<keyword id="KW-1185">Reference proteome</keyword>
<keyword id="KW-0808">Transferase</keyword>
<proteinExistence type="evidence at transcript level"/>
<feature type="chain" id="PRO_0000074156" description="UDP-glycosyltransferase 85A1">
    <location>
        <begin position="1"/>
        <end position="489"/>
    </location>
</feature>
<feature type="binding site" evidence="1">
    <location>
        <position position="307"/>
    </location>
    <ligand>
        <name>UDP-alpha-D-glucose</name>
        <dbReference type="ChEBI" id="CHEBI:58885"/>
    </ligand>
</feature>
<feature type="binding site" evidence="1">
    <location>
        <begin position="364"/>
        <end position="366"/>
    </location>
    <ligand>
        <name>UDP-alpha-D-glucose</name>
        <dbReference type="ChEBI" id="CHEBI:58885"/>
    </ligand>
</feature>
<feature type="binding site" evidence="1">
    <location>
        <begin position="381"/>
        <end position="389"/>
    </location>
    <ligand>
        <name>UDP-alpha-D-glucose</name>
        <dbReference type="ChEBI" id="CHEBI:58885"/>
    </ligand>
</feature>
<feature type="binding site" evidence="1">
    <location>
        <begin position="403"/>
        <end position="406"/>
    </location>
    <ligand>
        <name>UDP-alpha-D-glucose</name>
        <dbReference type="ChEBI" id="CHEBI:58885"/>
    </ligand>
</feature>
<name>U85A1_ARATH</name>
<comment type="function">
    <text evidence="2">Involved in the O-glucosylation of trans-zeatin and dihydrozeatin. Also active in vitro on cis-zeatin. Not active on N-glucosylated substrates.</text>
</comment>
<comment type="tissue specificity">
    <text evidence="3">Expressed in root tips, lateral root initials, root apex, shoots, leaf periphery, leaf primordia and flowers.</text>
</comment>
<comment type="similarity">
    <text evidence="4">Belongs to the UDP-glycosyltransferase family.</text>
</comment>